<keyword id="KW-0378">Hydrolase</keyword>
<keyword id="KW-0408">Iron</keyword>
<keyword id="KW-0479">Metal-binding</keyword>
<keyword id="KW-0648">Protein biosynthesis</keyword>
<reference key="1">
    <citation type="journal article" date="2009" name="Proc. Natl. Acad. Sci. U.S.A.">
        <title>Characterizing a model human gut microbiota composed of members of its two dominant bacterial phyla.</title>
        <authorList>
            <person name="Mahowald M.A."/>
            <person name="Rey F.E."/>
            <person name="Seedorf H."/>
            <person name="Turnbaugh P.J."/>
            <person name="Fulton R.S."/>
            <person name="Wollam A."/>
            <person name="Shah N."/>
            <person name="Wang C."/>
            <person name="Magrini V."/>
            <person name="Wilson R.K."/>
            <person name="Cantarel B.L."/>
            <person name="Coutinho P.M."/>
            <person name="Henrissat B."/>
            <person name="Crock L.W."/>
            <person name="Russell A."/>
            <person name="Verberkmoes N.C."/>
            <person name="Hettich R.L."/>
            <person name="Gordon J.I."/>
        </authorList>
    </citation>
    <scope>NUCLEOTIDE SEQUENCE [LARGE SCALE GENOMIC DNA]</scope>
    <source>
        <strain>ATCC 33656 / DSM 3377 / JCM 17463 / KCTC 5835 / LMG 30912 / VPI 0990</strain>
    </source>
</reference>
<evidence type="ECO:0000255" key="1">
    <source>
        <dbReference type="HAMAP-Rule" id="MF_00163"/>
    </source>
</evidence>
<gene>
    <name evidence="1" type="primary">def</name>
    <name type="ordered locus">EUBREC_2346</name>
</gene>
<accession>C4ZEV9</accession>
<organism>
    <name type="scientific">Agathobacter rectalis (strain ATCC 33656 / DSM 3377 / JCM 17463 / KCTC 5835 / VPI 0990)</name>
    <name type="common">Eubacterium rectale</name>
    <dbReference type="NCBI Taxonomy" id="515619"/>
    <lineage>
        <taxon>Bacteria</taxon>
        <taxon>Bacillati</taxon>
        <taxon>Bacillota</taxon>
        <taxon>Clostridia</taxon>
        <taxon>Lachnospirales</taxon>
        <taxon>Lachnospiraceae</taxon>
        <taxon>Agathobacter</taxon>
    </lineage>
</organism>
<protein>
    <recommendedName>
        <fullName evidence="1">Peptide deformylase</fullName>
        <shortName evidence="1">PDF</shortName>
        <ecNumber evidence="1">3.5.1.88</ecNumber>
    </recommendedName>
    <alternativeName>
        <fullName evidence="1">Polypeptide deformylase</fullName>
    </alternativeName>
</protein>
<feature type="chain" id="PRO_1000203603" description="Peptide deformylase">
    <location>
        <begin position="1"/>
        <end position="158"/>
    </location>
</feature>
<feature type="active site" evidence="1">
    <location>
        <position position="131"/>
    </location>
</feature>
<feature type="binding site" evidence="1">
    <location>
        <position position="88"/>
    </location>
    <ligand>
        <name>Fe cation</name>
        <dbReference type="ChEBI" id="CHEBI:24875"/>
    </ligand>
</feature>
<feature type="binding site" evidence="1">
    <location>
        <position position="130"/>
    </location>
    <ligand>
        <name>Fe cation</name>
        <dbReference type="ChEBI" id="CHEBI:24875"/>
    </ligand>
</feature>
<feature type="binding site" evidence="1">
    <location>
        <position position="134"/>
    </location>
    <ligand>
        <name>Fe cation</name>
        <dbReference type="ChEBI" id="CHEBI:24875"/>
    </ligand>
</feature>
<sequence length="158" mass="17397">MALRTIRVEGDPVLGKVCREVTEVTPKIVTLIDDMLETMYEANGVGLAAPQVGILKRIVVIDVGEGPIVMINPEIIESDGEQTGDEGCLSVPGKAGQVTRPNYVKARFMGEDMNEYEIEGEELLARCICHELDHLDGHLYVEKVEGALHDVTYEDTQE</sequence>
<dbReference type="EC" id="3.5.1.88" evidence="1"/>
<dbReference type="EMBL" id="CP001107">
    <property type="protein sequence ID" value="ACR76080.1"/>
    <property type="molecule type" value="Genomic_DNA"/>
</dbReference>
<dbReference type="RefSeq" id="WP_012743174.1">
    <property type="nucleotide sequence ID" value="NC_012781.1"/>
</dbReference>
<dbReference type="SMR" id="C4ZEV9"/>
<dbReference type="STRING" id="515619.EUBREC_2346"/>
<dbReference type="PaxDb" id="515619-EUBREC_2346"/>
<dbReference type="GeneID" id="86989109"/>
<dbReference type="KEGG" id="ere:EUBREC_2346"/>
<dbReference type="HOGENOM" id="CLU_061901_4_2_9"/>
<dbReference type="Proteomes" id="UP000001477">
    <property type="component" value="Chromosome"/>
</dbReference>
<dbReference type="GO" id="GO:0046872">
    <property type="term" value="F:metal ion binding"/>
    <property type="evidence" value="ECO:0007669"/>
    <property type="project" value="UniProtKB-KW"/>
</dbReference>
<dbReference type="GO" id="GO:0042586">
    <property type="term" value="F:peptide deformylase activity"/>
    <property type="evidence" value="ECO:0007669"/>
    <property type="project" value="UniProtKB-UniRule"/>
</dbReference>
<dbReference type="GO" id="GO:0043686">
    <property type="term" value="P:co-translational protein modification"/>
    <property type="evidence" value="ECO:0007669"/>
    <property type="project" value="TreeGrafter"/>
</dbReference>
<dbReference type="GO" id="GO:0006412">
    <property type="term" value="P:translation"/>
    <property type="evidence" value="ECO:0007669"/>
    <property type="project" value="UniProtKB-UniRule"/>
</dbReference>
<dbReference type="CDD" id="cd00487">
    <property type="entry name" value="Pep_deformylase"/>
    <property type="match status" value="1"/>
</dbReference>
<dbReference type="Gene3D" id="3.90.45.10">
    <property type="entry name" value="Peptide deformylase"/>
    <property type="match status" value="1"/>
</dbReference>
<dbReference type="HAMAP" id="MF_00163">
    <property type="entry name" value="Pep_deformylase"/>
    <property type="match status" value="1"/>
</dbReference>
<dbReference type="InterPro" id="IPR023635">
    <property type="entry name" value="Peptide_deformylase"/>
</dbReference>
<dbReference type="InterPro" id="IPR036821">
    <property type="entry name" value="Peptide_deformylase_sf"/>
</dbReference>
<dbReference type="NCBIfam" id="TIGR00079">
    <property type="entry name" value="pept_deformyl"/>
    <property type="match status" value="1"/>
</dbReference>
<dbReference type="NCBIfam" id="NF001159">
    <property type="entry name" value="PRK00150.1-3"/>
    <property type="match status" value="1"/>
</dbReference>
<dbReference type="PANTHER" id="PTHR10458">
    <property type="entry name" value="PEPTIDE DEFORMYLASE"/>
    <property type="match status" value="1"/>
</dbReference>
<dbReference type="PANTHER" id="PTHR10458:SF22">
    <property type="entry name" value="PEPTIDE DEFORMYLASE"/>
    <property type="match status" value="1"/>
</dbReference>
<dbReference type="Pfam" id="PF01327">
    <property type="entry name" value="Pep_deformylase"/>
    <property type="match status" value="1"/>
</dbReference>
<dbReference type="PIRSF" id="PIRSF004749">
    <property type="entry name" value="Pep_def"/>
    <property type="match status" value="1"/>
</dbReference>
<dbReference type="PRINTS" id="PR01576">
    <property type="entry name" value="PDEFORMYLASE"/>
</dbReference>
<dbReference type="SUPFAM" id="SSF56420">
    <property type="entry name" value="Peptide deformylase"/>
    <property type="match status" value="1"/>
</dbReference>
<proteinExistence type="inferred from homology"/>
<name>DEF_AGARV</name>
<comment type="function">
    <text evidence="1">Removes the formyl group from the N-terminal Met of newly synthesized proteins. Requires at least a dipeptide for an efficient rate of reaction. N-terminal L-methionine is a prerequisite for activity but the enzyme has broad specificity at other positions.</text>
</comment>
<comment type="catalytic activity">
    <reaction evidence="1">
        <text>N-terminal N-formyl-L-methionyl-[peptide] + H2O = N-terminal L-methionyl-[peptide] + formate</text>
        <dbReference type="Rhea" id="RHEA:24420"/>
        <dbReference type="Rhea" id="RHEA-COMP:10639"/>
        <dbReference type="Rhea" id="RHEA-COMP:10640"/>
        <dbReference type="ChEBI" id="CHEBI:15377"/>
        <dbReference type="ChEBI" id="CHEBI:15740"/>
        <dbReference type="ChEBI" id="CHEBI:49298"/>
        <dbReference type="ChEBI" id="CHEBI:64731"/>
        <dbReference type="EC" id="3.5.1.88"/>
    </reaction>
</comment>
<comment type="cofactor">
    <cofactor evidence="1">
        <name>Fe(2+)</name>
        <dbReference type="ChEBI" id="CHEBI:29033"/>
    </cofactor>
    <text evidence="1">Binds 1 Fe(2+) ion.</text>
</comment>
<comment type="similarity">
    <text evidence="1">Belongs to the polypeptide deformylase family.</text>
</comment>